<name>ARGI2_RAT</name>
<proteinExistence type="evidence at protein level"/>
<reference key="1">
    <citation type="journal article" date="1998" name="Mol. Genet. Metab.">
        <title>Cloning and characterization of the mouse and rat type II arginase genes.</title>
        <authorList>
            <person name="Iyer R.K."/>
            <person name="Bando J.M."/>
            <person name="Jenkinson C.P."/>
            <person name="Vockley J.G."/>
            <person name="Kim P.S."/>
            <person name="Kern R.M."/>
            <person name="Cederbaum S.D."/>
            <person name="Grody W.W."/>
        </authorList>
    </citation>
    <scope>NUCLEOTIDE SEQUENCE [MRNA]</scope>
    <source>
        <strain>Sprague-Dawley</strain>
        <tissue>Kidney</tissue>
    </source>
</reference>
<reference key="2">
    <citation type="journal article" date="1996" name="FEBS Lett.">
        <title>Molecular cloning of cDNA for nonhepatic mitochondrial arginase (arginase II) and comparison of its induction with nitric oxide synthase in a murine macrophage-like cell line.</title>
        <authorList>
            <person name="Gotoh T."/>
            <person name="Sonoki T."/>
            <person name="Nagasaki A."/>
            <person name="Terada K."/>
            <person name="Takiguchi M."/>
            <person name="Mori M."/>
        </authorList>
    </citation>
    <scope>NUCLEOTIDE SEQUENCE [MRNA] OF 87-168</scope>
    <source>
        <strain>Wistar</strain>
        <tissue>Small intestine</tissue>
    </source>
</reference>
<gene>
    <name type="primary">Arg2</name>
</gene>
<keyword id="KW-1064">Adaptive immunity</keyword>
<keyword id="KW-0056">Arginine metabolism</keyword>
<keyword id="KW-0378">Hydrolase</keyword>
<keyword id="KW-0391">Immunity</keyword>
<keyword id="KW-0399">Innate immunity</keyword>
<keyword id="KW-0464">Manganese</keyword>
<keyword id="KW-0479">Metal-binding</keyword>
<keyword id="KW-0496">Mitochondrion</keyword>
<keyword id="KW-1185">Reference proteome</keyword>
<keyword id="KW-0809">Transit peptide</keyword>
<keyword id="KW-0835">Urea cycle</keyword>
<dbReference type="EC" id="3.5.3.1" evidence="3"/>
<dbReference type="EMBL" id="U90887">
    <property type="protein sequence ID" value="AAC22580.1"/>
    <property type="molecule type" value="mRNA"/>
</dbReference>
<dbReference type="EMBL" id="D86928">
    <property type="protein sequence ID" value="BAA13183.1"/>
    <property type="molecule type" value="mRNA"/>
</dbReference>
<dbReference type="RefSeq" id="NP_062041.1">
    <property type="nucleotide sequence ID" value="NM_019168.1"/>
</dbReference>
<dbReference type="SMR" id="O08701"/>
<dbReference type="DIP" id="DIP-61133N"/>
<dbReference type="FunCoup" id="O08701">
    <property type="interactions" value="158"/>
</dbReference>
<dbReference type="IntAct" id="O08701">
    <property type="interactions" value="1"/>
</dbReference>
<dbReference type="STRING" id="10116.ENSRNOP00000073568"/>
<dbReference type="PhosphoSitePlus" id="O08701"/>
<dbReference type="PaxDb" id="10116-ENSRNOP00000015083"/>
<dbReference type="GeneID" id="29215"/>
<dbReference type="KEGG" id="rno:29215"/>
<dbReference type="UCSC" id="RGD:2151">
    <property type="organism name" value="rat"/>
</dbReference>
<dbReference type="AGR" id="RGD:2151"/>
<dbReference type="CTD" id="384"/>
<dbReference type="RGD" id="2151">
    <property type="gene designation" value="Arg2"/>
</dbReference>
<dbReference type="eggNOG" id="KOG2965">
    <property type="taxonomic scope" value="Eukaryota"/>
</dbReference>
<dbReference type="InParanoid" id="O08701"/>
<dbReference type="PhylomeDB" id="O08701"/>
<dbReference type="BRENDA" id="3.5.3.1">
    <property type="organism ID" value="5301"/>
</dbReference>
<dbReference type="Reactome" id="R-RNO-70635">
    <property type="pathway name" value="Urea cycle"/>
</dbReference>
<dbReference type="Reactome" id="R-RNO-9837999">
    <property type="pathway name" value="Mitochondrial protein degradation"/>
</dbReference>
<dbReference type="SABIO-RK" id="O08701"/>
<dbReference type="UniPathway" id="UPA00158">
    <property type="reaction ID" value="UER00270"/>
</dbReference>
<dbReference type="PRO" id="PR:O08701"/>
<dbReference type="Proteomes" id="UP000002494">
    <property type="component" value="Unplaced"/>
</dbReference>
<dbReference type="GO" id="GO:0005737">
    <property type="term" value="C:cytoplasm"/>
    <property type="evidence" value="ECO:0000318"/>
    <property type="project" value="GO_Central"/>
</dbReference>
<dbReference type="GO" id="GO:0005739">
    <property type="term" value="C:mitochondrion"/>
    <property type="evidence" value="ECO:0000314"/>
    <property type="project" value="MGI"/>
</dbReference>
<dbReference type="GO" id="GO:0004053">
    <property type="term" value="F:arginase activity"/>
    <property type="evidence" value="ECO:0000314"/>
    <property type="project" value="MGI"/>
</dbReference>
<dbReference type="GO" id="GO:0030145">
    <property type="term" value="F:manganese ion binding"/>
    <property type="evidence" value="ECO:0000318"/>
    <property type="project" value="GO_Central"/>
</dbReference>
<dbReference type="GO" id="GO:0050998">
    <property type="term" value="F:nitric-oxide synthase binding"/>
    <property type="evidence" value="ECO:0000353"/>
    <property type="project" value="RGD"/>
</dbReference>
<dbReference type="GO" id="GO:0002250">
    <property type="term" value="P:adaptive immune response"/>
    <property type="evidence" value="ECO:0007669"/>
    <property type="project" value="UniProtKB-KW"/>
</dbReference>
<dbReference type="GO" id="GO:0019547">
    <property type="term" value="P:arginine catabolic process to ornithine"/>
    <property type="evidence" value="ECO:0000314"/>
    <property type="project" value="RGD"/>
</dbReference>
<dbReference type="GO" id="GO:0006525">
    <property type="term" value="P:arginine metabolic process"/>
    <property type="evidence" value="ECO:0000315"/>
    <property type="project" value="RGD"/>
</dbReference>
<dbReference type="GO" id="GO:0071549">
    <property type="term" value="P:cellular response to dexamethasone stimulus"/>
    <property type="evidence" value="ECO:0000270"/>
    <property type="project" value="RGD"/>
</dbReference>
<dbReference type="GO" id="GO:0071353">
    <property type="term" value="P:cellular response to interleukin-4"/>
    <property type="evidence" value="ECO:0000270"/>
    <property type="project" value="RGD"/>
</dbReference>
<dbReference type="GO" id="GO:0071222">
    <property type="term" value="P:cellular response to lipopolysaccharide"/>
    <property type="evidence" value="ECO:0000270"/>
    <property type="project" value="RGD"/>
</dbReference>
<dbReference type="GO" id="GO:0071346">
    <property type="term" value="P:cellular response to type II interferon"/>
    <property type="evidence" value="ECO:0000270"/>
    <property type="project" value="RGD"/>
</dbReference>
<dbReference type="GO" id="GO:0030324">
    <property type="term" value="P:lung development"/>
    <property type="evidence" value="ECO:0000270"/>
    <property type="project" value="RGD"/>
</dbReference>
<dbReference type="GO" id="GO:0060135">
    <property type="term" value="P:maternal process involved in female pregnancy"/>
    <property type="evidence" value="ECO:0000270"/>
    <property type="project" value="RGD"/>
</dbReference>
<dbReference type="GO" id="GO:0007494">
    <property type="term" value="P:midgut development"/>
    <property type="evidence" value="ECO:0000270"/>
    <property type="project" value="RGD"/>
</dbReference>
<dbReference type="GO" id="GO:1905403">
    <property type="term" value="P:negative regulation of activated CD8-positive, alpha-beta T cell apoptotic process"/>
    <property type="evidence" value="ECO:0000266"/>
    <property type="project" value="RGD"/>
</dbReference>
<dbReference type="GO" id="GO:2000562">
    <property type="term" value="P:negative regulation of CD4-positive, alpha-beta T cell proliferation"/>
    <property type="evidence" value="ECO:0000266"/>
    <property type="project" value="RGD"/>
</dbReference>
<dbReference type="GO" id="GO:0071644">
    <property type="term" value="P:negative regulation of chemokine (C-C motif) ligand 4 production"/>
    <property type="evidence" value="ECO:0000266"/>
    <property type="project" value="RGD"/>
</dbReference>
<dbReference type="GO" id="GO:0071650">
    <property type="term" value="P:negative regulation of chemokine (C-C motif) ligand 5 production"/>
    <property type="evidence" value="ECO:0000266"/>
    <property type="project" value="RGD"/>
</dbReference>
<dbReference type="GO" id="GO:1900425">
    <property type="term" value="P:negative regulation of defense response to bacterium"/>
    <property type="evidence" value="ECO:0000266"/>
    <property type="project" value="RGD"/>
</dbReference>
<dbReference type="GO" id="GO:0032696">
    <property type="term" value="P:negative regulation of interleukin-13 production"/>
    <property type="evidence" value="ECO:0000266"/>
    <property type="project" value="RGD"/>
</dbReference>
<dbReference type="GO" id="GO:0032700">
    <property type="term" value="P:negative regulation of interleukin-17 production"/>
    <property type="evidence" value="ECO:0000266"/>
    <property type="project" value="RGD"/>
</dbReference>
<dbReference type="GO" id="GO:0071641">
    <property type="term" value="P:negative regulation of macrophage inflammatory protein 1 alpha production"/>
    <property type="evidence" value="ECO:0000266"/>
    <property type="project" value="RGD"/>
</dbReference>
<dbReference type="GO" id="GO:0045988">
    <property type="term" value="P:negative regulation of striated muscle contraction"/>
    <property type="evidence" value="ECO:0000315"/>
    <property type="project" value="RGD"/>
</dbReference>
<dbReference type="GO" id="GO:0032720">
    <property type="term" value="P:negative regulation of tumor necrosis factor production"/>
    <property type="evidence" value="ECO:0000266"/>
    <property type="project" value="RGD"/>
</dbReference>
<dbReference type="GO" id="GO:0002829">
    <property type="term" value="P:negative regulation of type 2 immune response"/>
    <property type="evidence" value="ECO:0000266"/>
    <property type="project" value="RGD"/>
</dbReference>
<dbReference type="GO" id="GO:2000774">
    <property type="term" value="P:positive regulation of cellular senescence"/>
    <property type="evidence" value="ECO:0000266"/>
    <property type="project" value="RGD"/>
</dbReference>
<dbReference type="GO" id="GO:0032651">
    <property type="term" value="P:regulation of interleukin-1 beta production"/>
    <property type="evidence" value="ECO:0000266"/>
    <property type="project" value="RGD"/>
</dbReference>
<dbReference type="GO" id="GO:1905541">
    <property type="term" value="P:regulation of L-arginine import across plasma membrane"/>
    <property type="evidence" value="ECO:0000314"/>
    <property type="project" value="RGD"/>
</dbReference>
<dbReference type="GO" id="GO:0045428">
    <property type="term" value="P:regulation of nitric oxide biosynthetic process"/>
    <property type="evidence" value="ECO:0000270"/>
    <property type="project" value="RGD"/>
</dbReference>
<dbReference type="GO" id="GO:1903426">
    <property type="term" value="P:regulation of reactive oxygen species biosynthetic process"/>
    <property type="evidence" value="ECO:0000266"/>
    <property type="project" value="RGD"/>
</dbReference>
<dbReference type="GO" id="GO:0014075">
    <property type="term" value="P:response to amine"/>
    <property type="evidence" value="ECO:0000270"/>
    <property type="project" value="RGD"/>
</dbReference>
<dbReference type="GO" id="GO:0043200">
    <property type="term" value="P:response to amino acid"/>
    <property type="evidence" value="ECO:0000270"/>
    <property type="project" value="RGD"/>
</dbReference>
<dbReference type="GO" id="GO:0048678">
    <property type="term" value="P:response to axon injury"/>
    <property type="evidence" value="ECO:0000270"/>
    <property type="project" value="RGD"/>
</dbReference>
<dbReference type="GO" id="GO:0046686">
    <property type="term" value="P:response to cadmium ion"/>
    <property type="evidence" value="ECO:0000270"/>
    <property type="project" value="RGD"/>
</dbReference>
<dbReference type="GO" id="GO:0009749">
    <property type="term" value="P:response to glucose"/>
    <property type="evidence" value="ECO:0000270"/>
    <property type="project" value="RGD"/>
</dbReference>
<dbReference type="GO" id="GO:0009635">
    <property type="term" value="P:response to herbicide"/>
    <property type="evidence" value="ECO:0000270"/>
    <property type="project" value="RGD"/>
</dbReference>
<dbReference type="GO" id="GO:0009725">
    <property type="term" value="P:response to hormone"/>
    <property type="evidence" value="ECO:0000270"/>
    <property type="project" value="RGD"/>
</dbReference>
<dbReference type="GO" id="GO:0001666">
    <property type="term" value="P:response to hypoxia"/>
    <property type="evidence" value="ECO:0000270"/>
    <property type="project" value="RGD"/>
</dbReference>
<dbReference type="GO" id="GO:0046689">
    <property type="term" value="P:response to mercury ion"/>
    <property type="evidence" value="ECO:0000270"/>
    <property type="project" value="RGD"/>
</dbReference>
<dbReference type="GO" id="GO:0007584">
    <property type="term" value="P:response to nutrient"/>
    <property type="evidence" value="ECO:0000270"/>
    <property type="project" value="RGD"/>
</dbReference>
<dbReference type="GO" id="GO:0010269">
    <property type="term" value="P:response to selenium ion"/>
    <property type="evidence" value="ECO:0000270"/>
    <property type="project" value="RGD"/>
</dbReference>
<dbReference type="GO" id="GO:0033197">
    <property type="term" value="P:response to vitamin E"/>
    <property type="evidence" value="ECO:0000270"/>
    <property type="project" value="RGD"/>
</dbReference>
<dbReference type="GO" id="GO:0009410">
    <property type="term" value="P:response to xenobiotic stimulus"/>
    <property type="evidence" value="ECO:0000270"/>
    <property type="project" value="RGD"/>
</dbReference>
<dbReference type="GO" id="GO:0006941">
    <property type="term" value="P:striated muscle contraction"/>
    <property type="evidence" value="ECO:0000266"/>
    <property type="project" value="RGD"/>
</dbReference>
<dbReference type="GO" id="GO:0000050">
    <property type="term" value="P:urea cycle"/>
    <property type="evidence" value="ECO:0007669"/>
    <property type="project" value="UniProtKB-UniPathway"/>
</dbReference>
<dbReference type="GO" id="GO:0001657">
    <property type="term" value="P:ureteric bud development"/>
    <property type="evidence" value="ECO:0000266"/>
    <property type="project" value="RGD"/>
</dbReference>
<dbReference type="CDD" id="cd09989">
    <property type="entry name" value="Arginase"/>
    <property type="match status" value="1"/>
</dbReference>
<dbReference type="FunFam" id="3.40.800.10:FF:000008">
    <property type="entry name" value="Arginase"/>
    <property type="match status" value="1"/>
</dbReference>
<dbReference type="Gene3D" id="3.40.800.10">
    <property type="entry name" value="Ureohydrolase domain"/>
    <property type="match status" value="1"/>
</dbReference>
<dbReference type="InterPro" id="IPR014033">
    <property type="entry name" value="Arginase"/>
</dbReference>
<dbReference type="InterPro" id="IPR006035">
    <property type="entry name" value="Ureohydrolase"/>
</dbReference>
<dbReference type="InterPro" id="IPR023696">
    <property type="entry name" value="Ureohydrolase_dom_sf"/>
</dbReference>
<dbReference type="InterPro" id="IPR020855">
    <property type="entry name" value="Ureohydrolase_Mn_BS"/>
</dbReference>
<dbReference type="NCBIfam" id="TIGR01229">
    <property type="entry name" value="rocF_arginase"/>
    <property type="match status" value="1"/>
</dbReference>
<dbReference type="PANTHER" id="PTHR43782">
    <property type="entry name" value="ARGINASE"/>
    <property type="match status" value="1"/>
</dbReference>
<dbReference type="PANTHER" id="PTHR43782:SF4">
    <property type="entry name" value="ARGINASE-2, MITOCHONDRIAL"/>
    <property type="match status" value="1"/>
</dbReference>
<dbReference type="Pfam" id="PF00491">
    <property type="entry name" value="Arginase"/>
    <property type="match status" value="1"/>
</dbReference>
<dbReference type="PIRSF" id="PIRSF036979">
    <property type="entry name" value="Arginase"/>
    <property type="match status" value="1"/>
</dbReference>
<dbReference type="PRINTS" id="PR00116">
    <property type="entry name" value="ARGINASE"/>
</dbReference>
<dbReference type="SUPFAM" id="SSF52768">
    <property type="entry name" value="Arginase/deacetylase"/>
    <property type="match status" value="1"/>
</dbReference>
<dbReference type="PROSITE" id="PS01053">
    <property type="entry name" value="ARGINASE_1"/>
    <property type="match status" value="1"/>
</dbReference>
<dbReference type="PROSITE" id="PS51409">
    <property type="entry name" value="ARGINASE_2"/>
    <property type="match status" value="1"/>
</dbReference>
<accession>O08701</accession>
<accession>P97539</accession>
<comment type="function">
    <text evidence="2 5">May play a role in the regulation of extra-urea cycle arginine metabolism and also in down-regulation of nitric oxide synthesis. Extrahepatic arginase functions to regulate L-arginine bioavailability to nitric oxid synthase (NOS). Arginine metabolism is a critical regulator of innate and adaptive immune responses. Seems to be involved in negative regulation of the survival capacity of activated T cells. May suppress inflammation-related signaling in asthmatic airway epithelium. May play a role in promoting prenatal immune suppression. Regulates RPS6KB1 signaling, which promotes endothelial cell senescence and inflammation and implicates NOS3/eNOS dysfunction. Can inhibit endothelial autophagy independently of its enzymatic activity implicating mTORC2 signaling. Involved in vascular smooth muscle cell senescence and apoptosis independently of its enzymatic activity.</text>
</comment>
<comment type="catalytic activity">
    <reaction evidence="3">
        <text>L-arginine + H2O = urea + L-ornithine</text>
        <dbReference type="Rhea" id="RHEA:20569"/>
        <dbReference type="ChEBI" id="CHEBI:15377"/>
        <dbReference type="ChEBI" id="CHEBI:16199"/>
        <dbReference type="ChEBI" id="CHEBI:32682"/>
        <dbReference type="ChEBI" id="CHEBI:46911"/>
        <dbReference type="EC" id="3.5.3.1"/>
    </reaction>
</comment>
<comment type="cofactor">
    <cofactor evidence="7">
        <name>Mn(2+)</name>
        <dbReference type="ChEBI" id="CHEBI:29035"/>
    </cofactor>
    <text evidence="7">Binds 2 manganese ions per subunit.</text>
</comment>
<comment type="pathway">
    <text evidence="3">Nitrogen metabolism; urea cycle; L-ornithine and urea from L-arginine: step 1/1.</text>
</comment>
<comment type="subunit">
    <text evidence="5">Homotrimer.</text>
</comment>
<comment type="interaction">
    <interactant intactId="EBI-15573788">
        <id>O08701</id>
    </interactant>
    <interactant intactId="EBI-349460">
        <id>P29476</id>
        <label>Nos1</label>
    </interactant>
    <organismsDiffer>false</organismsDiffer>
    <experiments>2</experiments>
</comment>
<comment type="subcellular location">
    <subcellularLocation>
        <location evidence="2 5">Mitochondrion</location>
    </subcellularLocation>
</comment>
<comment type="similarity">
    <text evidence="7">Belongs to the arginase family.</text>
</comment>
<sequence length="354" mass="38640">MFLRSSVSRLLHGQIPCALTRSVHSVAVVGAPFSRGQKKKGVEYGPAAIREAGLLKRLSMLGCHIKDFGDLSFTNVPKDDPYNNLVVYPRSVGIANQELAEVVSRAVSGGYSCVTLGGDHSLAIGTISGHARHHPDLCVIWVDAHADINTPLTTVSGNIHGQPLSFLIRELQDKVPQLPGFSWIKPCLSPPNLVYIGLRDVEPAEHFILKSFDIQYFSMRDIDRLGIQKVMEQTFDRLIGKRKRPIHLSFDIDAFDPKLAPATGTPVVGGLTYREGLYITEEIHSTGLLSALDLVEVNPHLATSEEEAKATASLAVDVIASSFGQTREGGHIAYDHLPTPSSPHESEKEECVRI</sequence>
<feature type="transit peptide" description="Mitochondrion" evidence="6">
    <location>
        <begin position="1"/>
        <end position="22"/>
    </location>
</feature>
<feature type="chain" id="PRO_0000002086" description="Arginase-2, mitochondrial">
    <location>
        <begin position="23"/>
        <end position="354"/>
    </location>
</feature>
<feature type="binding site" evidence="7">
    <location>
        <position position="120"/>
    </location>
    <ligand>
        <name>Mn(2+)</name>
        <dbReference type="ChEBI" id="CHEBI:29035"/>
        <label>1</label>
    </ligand>
</feature>
<feature type="binding site" evidence="7">
    <location>
        <position position="143"/>
    </location>
    <ligand>
        <name>Mn(2+)</name>
        <dbReference type="ChEBI" id="CHEBI:29035"/>
        <label>1</label>
    </ligand>
</feature>
<feature type="binding site" evidence="7">
    <location>
        <position position="143"/>
    </location>
    <ligand>
        <name>Mn(2+)</name>
        <dbReference type="ChEBI" id="CHEBI:29035"/>
        <label>2</label>
    </ligand>
</feature>
<feature type="binding site" evidence="3">
    <location>
        <begin position="145"/>
        <end position="149"/>
    </location>
    <ligand>
        <name>substrate</name>
    </ligand>
</feature>
<feature type="binding site" evidence="7">
    <location>
        <position position="145"/>
    </location>
    <ligand>
        <name>Mn(2+)</name>
        <dbReference type="ChEBI" id="CHEBI:29035"/>
        <label>2</label>
    </ligand>
</feature>
<feature type="binding site" evidence="7">
    <location>
        <position position="147"/>
    </location>
    <ligand>
        <name>Mn(2+)</name>
        <dbReference type="ChEBI" id="CHEBI:29035"/>
        <label>1</label>
    </ligand>
</feature>
<feature type="binding site" evidence="3">
    <location>
        <begin position="156"/>
        <end position="158"/>
    </location>
    <ligand>
        <name>substrate</name>
    </ligand>
</feature>
<feature type="binding site" evidence="1">
    <location>
        <position position="202"/>
    </location>
    <ligand>
        <name>substrate</name>
    </ligand>
</feature>
<feature type="binding site" evidence="7">
    <location>
        <position position="251"/>
    </location>
    <ligand>
        <name>Mn(2+)</name>
        <dbReference type="ChEBI" id="CHEBI:29035"/>
        <label>1</label>
    </ligand>
</feature>
<feature type="binding site" evidence="7">
    <location>
        <position position="251"/>
    </location>
    <ligand>
        <name>Mn(2+)</name>
        <dbReference type="ChEBI" id="CHEBI:29035"/>
        <label>2</label>
    </ligand>
</feature>
<feature type="binding site" evidence="7">
    <location>
        <position position="253"/>
    </location>
    <ligand>
        <name>Mn(2+)</name>
        <dbReference type="ChEBI" id="CHEBI:29035"/>
        <label>2</label>
    </ligand>
</feature>
<feature type="binding site" evidence="4">
    <location>
        <position position="265"/>
    </location>
    <ligand>
        <name>substrate</name>
    </ligand>
</feature>
<feature type="binding site" evidence="5">
    <location>
        <position position="296"/>
    </location>
    <ligand>
        <name>substrate</name>
    </ligand>
</feature>
<feature type="sequence conflict" description="In Ref. 2; BAA13183." evidence="8" ref="2">
    <original>Y</original>
    <variation>N</variation>
    <location>
        <position position="88"/>
    </location>
</feature>
<feature type="sequence conflict" description="In Ref. 2; BAA13183." evidence="8" ref="2">
    <original>R</original>
    <variation>P</variation>
    <location>
        <position position="90"/>
    </location>
</feature>
<feature type="sequence conflict" description="In Ref. 2; BAA13183." evidence="8" ref="2">
    <original>A</original>
    <variation>S</variation>
    <location>
        <position position="100"/>
    </location>
</feature>
<feature type="sequence conflict" description="In Ref. 2; BAA13183." evidence="8" ref="2">
    <original>L</original>
    <variation>M</variation>
    <location>
        <position position="116"/>
    </location>
</feature>
<feature type="sequence conflict" description="In Ref. 2; BAA13183." evidence="8" ref="2">
    <original>D</original>
    <variation>Y</variation>
    <location>
        <position position="119"/>
    </location>
</feature>
<feature type="sequence conflict" description="In Ref. 2; BAA13183." evidence="8" ref="2">
    <original>S</original>
    <variation>I</variation>
    <location>
        <position position="128"/>
    </location>
</feature>
<feature type="sequence conflict" description="In Ref. 2; BAA13183." evidence="8" ref="2">
    <original>D</original>
    <variation>Y</variation>
    <location>
        <position position="143"/>
    </location>
</feature>
<feature type="sequence conflict" description="In Ref. 2; BAA13183." evidence="8" ref="2">
    <original>L</original>
    <variation>V</variation>
    <location>
        <position position="164"/>
    </location>
</feature>
<feature type="sequence conflict" description="In Ref. 2; BAA13183." evidence="8" ref="2">
    <original>I</original>
    <variation>L</variation>
    <location>
        <position position="168"/>
    </location>
</feature>
<protein>
    <recommendedName>
        <fullName>Arginase-2, mitochondrial</fullName>
        <ecNumber evidence="3">3.5.3.1</ecNumber>
    </recommendedName>
    <alternativeName>
        <fullName>Arginase II</fullName>
    </alternativeName>
    <alternativeName>
        <fullName>Kidney-type arginase</fullName>
    </alternativeName>
    <alternativeName>
        <fullName>Non-hepatic arginase</fullName>
    </alternativeName>
    <alternativeName>
        <fullName>Type II arginase</fullName>
    </alternativeName>
</protein>
<evidence type="ECO:0000250" key="1"/>
<evidence type="ECO:0000250" key="2">
    <source>
        <dbReference type="UniProtKB" id="O08691"/>
    </source>
</evidence>
<evidence type="ECO:0000250" key="3">
    <source>
        <dbReference type="UniProtKB" id="P05089"/>
    </source>
</evidence>
<evidence type="ECO:0000250" key="4">
    <source>
        <dbReference type="UniProtKB" id="P53608"/>
    </source>
</evidence>
<evidence type="ECO:0000250" key="5">
    <source>
        <dbReference type="UniProtKB" id="P78540"/>
    </source>
</evidence>
<evidence type="ECO:0000255" key="6"/>
<evidence type="ECO:0000255" key="7">
    <source>
        <dbReference type="PROSITE-ProRule" id="PRU00742"/>
    </source>
</evidence>
<evidence type="ECO:0000305" key="8"/>
<organism>
    <name type="scientific">Rattus norvegicus</name>
    <name type="common">Rat</name>
    <dbReference type="NCBI Taxonomy" id="10116"/>
    <lineage>
        <taxon>Eukaryota</taxon>
        <taxon>Metazoa</taxon>
        <taxon>Chordata</taxon>
        <taxon>Craniata</taxon>
        <taxon>Vertebrata</taxon>
        <taxon>Euteleostomi</taxon>
        <taxon>Mammalia</taxon>
        <taxon>Eutheria</taxon>
        <taxon>Euarchontoglires</taxon>
        <taxon>Glires</taxon>
        <taxon>Rodentia</taxon>
        <taxon>Myomorpha</taxon>
        <taxon>Muroidea</taxon>
        <taxon>Muridae</taxon>
        <taxon>Murinae</taxon>
        <taxon>Rattus</taxon>
    </lineage>
</organism>